<name>GCH1L_STAAW</name>
<keyword id="KW-0479">Metal-binding</keyword>
<keyword id="KW-0862">Zinc</keyword>
<sequence length="366" mass="41153">MKIADLMTLLDHHVPFSTAESWDNVGLLIGDEDVEVTGVLTALDCTLEVVNEAIEKGYNTIISHHPLIFKGVTSLKANGYGLIIRKLIQHDINLIAMHTNLDVNPYGVNMMLAKAMGLKNISIINNQQDVYYKVQTYIPKDNVGPFKDKLSENGLAQEGNYEYCFFESEGRGQFKPVGEANPTIGQIDKIEYVDEVKIEFMIDAYQKSRAEQLIKQYHPYETPVFDFIEIKQTSLYGLGVMAEVDNQMTLEDFAADIKSKLNIPSVRFVGESNQKIKRIAIIGGSGIGYEYQAVQQGADVFVTGDIKHHDALDAKIHGVNLIDINHYSEYVMKEGLKTLLMNRFNTEKINIDVEASTINTDPFQYI</sequence>
<gene>
    <name type="ordered locus">MW1511</name>
</gene>
<comment type="subunit">
    <text evidence="1">Homohexamer.</text>
</comment>
<comment type="similarity">
    <text evidence="2">Belongs to the GTP cyclohydrolase I type 2/NIF3 family.</text>
</comment>
<organism>
    <name type="scientific">Staphylococcus aureus (strain MW2)</name>
    <dbReference type="NCBI Taxonomy" id="196620"/>
    <lineage>
        <taxon>Bacteria</taxon>
        <taxon>Bacillati</taxon>
        <taxon>Bacillota</taxon>
        <taxon>Bacilli</taxon>
        <taxon>Bacillales</taxon>
        <taxon>Staphylococcaceae</taxon>
        <taxon>Staphylococcus</taxon>
    </lineage>
</organism>
<proteinExistence type="inferred from homology"/>
<protein>
    <recommendedName>
        <fullName>GTP cyclohydrolase 1 type 2 homolog</fullName>
    </recommendedName>
</protein>
<dbReference type="EMBL" id="BA000033">
    <property type="protein sequence ID" value="BAB95376.1"/>
    <property type="molecule type" value="Genomic_DNA"/>
</dbReference>
<dbReference type="RefSeq" id="WP_000683932.1">
    <property type="nucleotide sequence ID" value="NC_003923.1"/>
</dbReference>
<dbReference type="SMR" id="Q8NWB9"/>
<dbReference type="KEGG" id="sam:MW1511"/>
<dbReference type="HOGENOM" id="CLU_037423_1_0_9"/>
<dbReference type="GO" id="GO:0005737">
    <property type="term" value="C:cytoplasm"/>
    <property type="evidence" value="ECO:0007669"/>
    <property type="project" value="TreeGrafter"/>
</dbReference>
<dbReference type="GO" id="GO:0046872">
    <property type="term" value="F:metal ion binding"/>
    <property type="evidence" value="ECO:0007669"/>
    <property type="project" value="UniProtKB-KW"/>
</dbReference>
<dbReference type="FunFam" id="3.40.1390.30:FF:000001">
    <property type="entry name" value="GTP cyclohydrolase 1 type 2"/>
    <property type="match status" value="1"/>
</dbReference>
<dbReference type="FunFam" id="3.30.70.120:FF:000006">
    <property type="entry name" value="GTP cyclohydrolase 1 type 2 homolog"/>
    <property type="match status" value="1"/>
</dbReference>
<dbReference type="Gene3D" id="3.30.70.120">
    <property type="match status" value="1"/>
</dbReference>
<dbReference type="Gene3D" id="3.40.1390.30">
    <property type="entry name" value="NIF3 (NGG1p interacting factor 3)-like"/>
    <property type="match status" value="1"/>
</dbReference>
<dbReference type="InterPro" id="IPR002678">
    <property type="entry name" value="DUF34/NIF3"/>
</dbReference>
<dbReference type="InterPro" id="IPR017221">
    <property type="entry name" value="DUF34/NIF3_bac"/>
</dbReference>
<dbReference type="InterPro" id="IPR036069">
    <property type="entry name" value="DUF34/NIF3_sf"/>
</dbReference>
<dbReference type="InterPro" id="IPR015867">
    <property type="entry name" value="N-reg_PII/ATP_PRibTrfase_C"/>
</dbReference>
<dbReference type="NCBIfam" id="TIGR00486">
    <property type="entry name" value="YbgI_SA1388"/>
    <property type="match status" value="1"/>
</dbReference>
<dbReference type="PANTHER" id="PTHR13799:SF14">
    <property type="entry name" value="GTP CYCLOHYDROLASE 1 TYPE 2 HOMOLOG"/>
    <property type="match status" value="1"/>
</dbReference>
<dbReference type="PANTHER" id="PTHR13799">
    <property type="entry name" value="NGG1 INTERACTING FACTOR 3"/>
    <property type="match status" value="1"/>
</dbReference>
<dbReference type="Pfam" id="PF01784">
    <property type="entry name" value="DUF34_NIF3"/>
    <property type="match status" value="1"/>
</dbReference>
<dbReference type="PIRSF" id="PIRSF037489">
    <property type="entry name" value="UCP037489_NIF3_YqfO"/>
    <property type="match status" value="1"/>
</dbReference>
<dbReference type="SUPFAM" id="SSF102705">
    <property type="entry name" value="NIF3 (NGG1p interacting factor 3)-like"/>
    <property type="match status" value="1"/>
</dbReference>
<evidence type="ECO:0000250" key="1">
    <source>
        <dbReference type="UniProtKB" id="P67272"/>
    </source>
</evidence>
<evidence type="ECO:0000305" key="2"/>
<accession>Q8NWB9</accession>
<reference key="1">
    <citation type="journal article" date="2002" name="Lancet">
        <title>Genome and virulence determinants of high virulence community-acquired MRSA.</title>
        <authorList>
            <person name="Baba T."/>
            <person name="Takeuchi F."/>
            <person name="Kuroda M."/>
            <person name="Yuzawa H."/>
            <person name="Aoki K."/>
            <person name="Oguchi A."/>
            <person name="Nagai Y."/>
            <person name="Iwama N."/>
            <person name="Asano K."/>
            <person name="Naimi T."/>
            <person name="Kuroda H."/>
            <person name="Cui L."/>
            <person name="Yamamoto K."/>
            <person name="Hiramatsu K."/>
        </authorList>
    </citation>
    <scope>NUCLEOTIDE SEQUENCE [LARGE SCALE GENOMIC DNA]</scope>
    <source>
        <strain>MW2</strain>
    </source>
</reference>
<feature type="chain" id="PRO_0000147332" description="GTP cyclohydrolase 1 type 2 homolog">
    <location>
        <begin position="1"/>
        <end position="366"/>
    </location>
</feature>
<feature type="binding site" evidence="1">
    <location>
        <position position="64"/>
    </location>
    <ligand>
        <name>Zn(2+)</name>
        <dbReference type="ChEBI" id="CHEBI:29105"/>
        <label>1</label>
    </ligand>
</feature>
<feature type="binding site" evidence="1">
    <location>
        <position position="65"/>
    </location>
    <ligand>
        <name>Zn(2+)</name>
        <dbReference type="ChEBI" id="CHEBI:29105"/>
        <label>2</label>
    </ligand>
</feature>
<feature type="binding site" evidence="1">
    <location>
        <position position="102"/>
    </location>
    <ligand>
        <name>Zn(2+)</name>
        <dbReference type="ChEBI" id="CHEBI:29105"/>
        <label>1</label>
    </ligand>
</feature>
<feature type="binding site" evidence="1">
    <location>
        <position position="326"/>
    </location>
    <ligand>
        <name>Zn(2+)</name>
        <dbReference type="ChEBI" id="CHEBI:29105"/>
        <label>2</label>
    </ligand>
</feature>
<feature type="binding site" evidence="1">
    <location>
        <position position="329"/>
    </location>
    <ligand>
        <name>Zn(2+)</name>
        <dbReference type="ChEBI" id="CHEBI:29105"/>
        <label>1</label>
    </ligand>
</feature>
<feature type="binding site" evidence="1">
    <location>
        <position position="329"/>
    </location>
    <ligand>
        <name>Zn(2+)</name>
        <dbReference type="ChEBI" id="CHEBI:29105"/>
        <label>2</label>
    </ligand>
</feature>